<gene>
    <name evidence="1" type="primary">tdh</name>
    <name type="ordered locus">SeAg_B3926</name>
</gene>
<evidence type="ECO:0000255" key="1">
    <source>
        <dbReference type="HAMAP-Rule" id="MF_00627"/>
    </source>
</evidence>
<dbReference type="EC" id="1.1.1.103" evidence="1"/>
<dbReference type="EMBL" id="CP001138">
    <property type="protein sequence ID" value="ACH49936.1"/>
    <property type="molecule type" value="Genomic_DNA"/>
</dbReference>
<dbReference type="RefSeq" id="WP_000645990.1">
    <property type="nucleotide sequence ID" value="NC_011149.1"/>
</dbReference>
<dbReference type="SMR" id="B5EXC3"/>
<dbReference type="KEGG" id="sea:SeAg_B3926"/>
<dbReference type="HOGENOM" id="CLU_026673_11_0_6"/>
<dbReference type="UniPathway" id="UPA00046">
    <property type="reaction ID" value="UER00505"/>
</dbReference>
<dbReference type="Proteomes" id="UP000008819">
    <property type="component" value="Chromosome"/>
</dbReference>
<dbReference type="GO" id="GO:0005737">
    <property type="term" value="C:cytoplasm"/>
    <property type="evidence" value="ECO:0007669"/>
    <property type="project" value="UniProtKB-SubCell"/>
</dbReference>
<dbReference type="GO" id="GO:0008743">
    <property type="term" value="F:L-threonine 3-dehydrogenase activity"/>
    <property type="evidence" value="ECO:0007669"/>
    <property type="project" value="UniProtKB-UniRule"/>
</dbReference>
<dbReference type="GO" id="GO:0008270">
    <property type="term" value="F:zinc ion binding"/>
    <property type="evidence" value="ECO:0007669"/>
    <property type="project" value="UniProtKB-UniRule"/>
</dbReference>
<dbReference type="GO" id="GO:0019518">
    <property type="term" value="P:L-threonine catabolic process to glycine"/>
    <property type="evidence" value="ECO:0007669"/>
    <property type="project" value="UniProtKB-UniPathway"/>
</dbReference>
<dbReference type="FunFam" id="3.40.50.720:FF:000059">
    <property type="entry name" value="L-threonine 3-dehydrogenase"/>
    <property type="match status" value="1"/>
</dbReference>
<dbReference type="Gene3D" id="3.90.180.10">
    <property type="entry name" value="Medium-chain alcohol dehydrogenases, catalytic domain"/>
    <property type="match status" value="1"/>
</dbReference>
<dbReference type="Gene3D" id="3.40.50.720">
    <property type="entry name" value="NAD(P)-binding Rossmann-like Domain"/>
    <property type="match status" value="1"/>
</dbReference>
<dbReference type="HAMAP" id="MF_00627">
    <property type="entry name" value="Thr_dehydrog"/>
    <property type="match status" value="1"/>
</dbReference>
<dbReference type="InterPro" id="IPR013149">
    <property type="entry name" value="ADH-like_C"/>
</dbReference>
<dbReference type="InterPro" id="IPR013154">
    <property type="entry name" value="ADH-like_N"/>
</dbReference>
<dbReference type="InterPro" id="IPR002328">
    <property type="entry name" value="ADH_Zn_CS"/>
</dbReference>
<dbReference type="InterPro" id="IPR011032">
    <property type="entry name" value="GroES-like_sf"/>
</dbReference>
<dbReference type="InterPro" id="IPR004627">
    <property type="entry name" value="L-Threonine_3-DHase"/>
</dbReference>
<dbReference type="InterPro" id="IPR036291">
    <property type="entry name" value="NAD(P)-bd_dom_sf"/>
</dbReference>
<dbReference type="InterPro" id="IPR020843">
    <property type="entry name" value="PKS_ER"/>
</dbReference>
<dbReference type="InterPro" id="IPR050129">
    <property type="entry name" value="Zn_alcohol_dh"/>
</dbReference>
<dbReference type="NCBIfam" id="NF003808">
    <property type="entry name" value="PRK05396.1"/>
    <property type="match status" value="1"/>
</dbReference>
<dbReference type="NCBIfam" id="TIGR00692">
    <property type="entry name" value="tdh"/>
    <property type="match status" value="1"/>
</dbReference>
<dbReference type="PANTHER" id="PTHR43401">
    <property type="entry name" value="L-THREONINE 3-DEHYDROGENASE"/>
    <property type="match status" value="1"/>
</dbReference>
<dbReference type="PANTHER" id="PTHR43401:SF2">
    <property type="entry name" value="L-THREONINE 3-DEHYDROGENASE"/>
    <property type="match status" value="1"/>
</dbReference>
<dbReference type="Pfam" id="PF08240">
    <property type="entry name" value="ADH_N"/>
    <property type="match status" value="1"/>
</dbReference>
<dbReference type="Pfam" id="PF00107">
    <property type="entry name" value="ADH_zinc_N"/>
    <property type="match status" value="1"/>
</dbReference>
<dbReference type="SMART" id="SM00829">
    <property type="entry name" value="PKS_ER"/>
    <property type="match status" value="1"/>
</dbReference>
<dbReference type="SUPFAM" id="SSF50129">
    <property type="entry name" value="GroES-like"/>
    <property type="match status" value="1"/>
</dbReference>
<dbReference type="SUPFAM" id="SSF51735">
    <property type="entry name" value="NAD(P)-binding Rossmann-fold domains"/>
    <property type="match status" value="1"/>
</dbReference>
<dbReference type="PROSITE" id="PS00059">
    <property type="entry name" value="ADH_ZINC"/>
    <property type="match status" value="1"/>
</dbReference>
<accession>B5EXC3</accession>
<comment type="function">
    <text evidence="1">Catalyzes the NAD(+)-dependent oxidation of L-threonine to 2-amino-3-ketobutyrate.</text>
</comment>
<comment type="catalytic activity">
    <reaction evidence="1">
        <text>L-threonine + NAD(+) = (2S)-2-amino-3-oxobutanoate + NADH + H(+)</text>
        <dbReference type="Rhea" id="RHEA:13161"/>
        <dbReference type="ChEBI" id="CHEBI:15378"/>
        <dbReference type="ChEBI" id="CHEBI:57540"/>
        <dbReference type="ChEBI" id="CHEBI:57926"/>
        <dbReference type="ChEBI" id="CHEBI:57945"/>
        <dbReference type="ChEBI" id="CHEBI:78948"/>
        <dbReference type="EC" id="1.1.1.103"/>
    </reaction>
</comment>
<comment type="cofactor">
    <cofactor evidence="1">
        <name>Zn(2+)</name>
        <dbReference type="ChEBI" id="CHEBI:29105"/>
    </cofactor>
    <text evidence="1">Binds 2 Zn(2+) ions per subunit.</text>
</comment>
<comment type="pathway">
    <text evidence="1">Amino-acid degradation; L-threonine degradation via oxydo-reductase pathway; glycine from L-threonine: step 1/2.</text>
</comment>
<comment type="subunit">
    <text evidence="1">Homotetramer.</text>
</comment>
<comment type="subcellular location">
    <subcellularLocation>
        <location evidence="1">Cytoplasm</location>
    </subcellularLocation>
</comment>
<comment type="similarity">
    <text evidence="1">Belongs to the zinc-containing alcohol dehydrogenase family.</text>
</comment>
<protein>
    <recommendedName>
        <fullName evidence="1">L-threonine 3-dehydrogenase</fullName>
        <shortName evidence="1">TDH</shortName>
        <ecNumber evidence="1">1.1.1.103</ecNumber>
    </recommendedName>
</protein>
<proteinExistence type="inferred from homology"/>
<keyword id="KW-0963">Cytoplasm</keyword>
<keyword id="KW-0479">Metal-binding</keyword>
<keyword id="KW-0520">NAD</keyword>
<keyword id="KW-0560">Oxidoreductase</keyword>
<keyword id="KW-0862">Zinc</keyword>
<feature type="chain" id="PRO_1000130558" description="L-threonine 3-dehydrogenase">
    <location>
        <begin position="1"/>
        <end position="341"/>
    </location>
</feature>
<feature type="active site" description="Charge relay system" evidence="1">
    <location>
        <position position="40"/>
    </location>
</feature>
<feature type="active site" description="Charge relay system" evidence="1">
    <location>
        <position position="43"/>
    </location>
</feature>
<feature type="binding site" evidence="1">
    <location>
        <position position="38"/>
    </location>
    <ligand>
        <name>Zn(2+)</name>
        <dbReference type="ChEBI" id="CHEBI:29105"/>
        <label>1</label>
        <note>catalytic</note>
    </ligand>
</feature>
<feature type="binding site" evidence="1">
    <location>
        <position position="63"/>
    </location>
    <ligand>
        <name>Zn(2+)</name>
        <dbReference type="ChEBI" id="CHEBI:29105"/>
        <label>1</label>
        <note>catalytic</note>
    </ligand>
</feature>
<feature type="binding site" evidence="1">
    <location>
        <position position="64"/>
    </location>
    <ligand>
        <name>Zn(2+)</name>
        <dbReference type="ChEBI" id="CHEBI:29105"/>
        <label>1</label>
        <note>catalytic</note>
    </ligand>
</feature>
<feature type="binding site" evidence="1">
    <location>
        <position position="93"/>
    </location>
    <ligand>
        <name>Zn(2+)</name>
        <dbReference type="ChEBI" id="CHEBI:29105"/>
        <label>2</label>
    </ligand>
</feature>
<feature type="binding site" evidence="1">
    <location>
        <position position="96"/>
    </location>
    <ligand>
        <name>Zn(2+)</name>
        <dbReference type="ChEBI" id="CHEBI:29105"/>
        <label>2</label>
    </ligand>
</feature>
<feature type="binding site" evidence="1">
    <location>
        <position position="99"/>
    </location>
    <ligand>
        <name>Zn(2+)</name>
        <dbReference type="ChEBI" id="CHEBI:29105"/>
        <label>2</label>
    </ligand>
</feature>
<feature type="binding site" evidence="1">
    <location>
        <position position="107"/>
    </location>
    <ligand>
        <name>Zn(2+)</name>
        <dbReference type="ChEBI" id="CHEBI:29105"/>
        <label>2</label>
    </ligand>
</feature>
<feature type="binding site" evidence="1">
    <location>
        <position position="175"/>
    </location>
    <ligand>
        <name>NAD(+)</name>
        <dbReference type="ChEBI" id="CHEBI:57540"/>
    </ligand>
</feature>
<feature type="binding site" evidence="1">
    <location>
        <position position="195"/>
    </location>
    <ligand>
        <name>NAD(+)</name>
        <dbReference type="ChEBI" id="CHEBI:57540"/>
    </ligand>
</feature>
<feature type="binding site" evidence="1">
    <location>
        <position position="200"/>
    </location>
    <ligand>
        <name>NAD(+)</name>
        <dbReference type="ChEBI" id="CHEBI:57540"/>
    </ligand>
</feature>
<feature type="binding site" evidence="1">
    <location>
        <begin position="262"/>
        <end position="264"/>
    </location>
    <ligand>
        <name>NAD(+)</name>
        <dbReference type="ChEBI" id="CHEBI:57540"/>
    </ligand>
</feature>
<feature type="binding site" evidence="1">
    <location>
        <begin position="286"/>
        <end position="287"/>
    </location>
    <ligand>
        <name>NAD(+)</name>
        <dbReference type="ChEBI" id="CHEBI:57540"/>
    </ligand>
</feature>
<feature type="site" description="Important for catalytic activity for the proton relay mechanism but does not participate directly in the coordination of zinc atom" evidence="1">
    <location>
        <position position="148"/>
    </location>
</feature>
<reference key="1">
    <citation type="journal article" date="2011" name="J. Bacteriol.">
        <title>Comparative genomics of 28 Salmonella enterica isolates: evidence for CRISPR-mediated adaptive sublineage evolution.</title>
        <authorList>
            <person name="Fricke W.F."/>
            <person name="Mammel M.K."/>
            <person name="McDermott P.F."/>
            <person name="Tartera C."/>
            <person name="White D.G."/>
            <person name="Leclerc J.E."/>
            <person name="Ravel J."/>
            <person name="Cebula T.A."/>
        </authorList>
    </citation>
    <scope>NUCLEOTIDE SEQUENCE [LARGE SCALE GENOMIC DNA]</scope>
    <source>
        <strain>SL483</strain>
    </source>
</reference>
<sequence length="341" mass="37213">MKALSKLKAEEGIWMTDVPEPEVGHNDLLIKIRKTAICGTDVHIYNWDDWSQKTIPVPMVVGHEYVGEVVGIGQEVKGFKIGDRVSGEGHITCGHCRNCRGGRTHLCRNTTGVGVNRPGCFAEYLVIPAFNAFKIPDNISDDLASIFDPFGNAVHTALSFDLVGEDVLVSGAGPIGVMAAAVAKHVGARHVVITDVNEYRLELARKMGVTRAVNVAKESLNDVMAELGMTEGFDVGLEMSGAPPAFRTMLDTMNHGGRIAMLGIPPSDMSIDWTKVIFKGLFIKGIYGREMFETWYKMAALIQSGLDLSPIITHRFSIDDFQKGFDAMRSGQSGKVILSWD</sequence>
<organism>
    <name type="scientific">Salmonella agona (strain SL483)</name>
    <dbReference type="NCBI Taxonomy" id="454166"/>
    <lineage>
        <taxon>Bacteria</taxon>
        <taxon>Pseudomonadati</taxon>
        <taxon>Pseudomonadota</taxon>
        <taxon>Gammaproteobacteria</taxon>
        <taxon>Enterobacterales</taxon>
        <taxon>Enterobacteriaceae</taxon>
        <taxon>Salmonella</taxon>
    </lineage>
</organism>
<name>TDH_SALA4</name>